<proteinExistence type="inferred from homology"/>
<reference key="1">
    <citation type="journal article" date="2007" name="PLoS Genet.">
        <title>Patterns and implications of gene gain and loss in the evolution of Prochlorococcus.</title>
        <authorList>
            <person name="Kettler G.C."/>
            <person name="Martiny A.C."/>
            <person name="Huang K."/>
            <person name="Zucker J."/>
            <person name="Coleman M.L."/>
            <person name="Rodrigue S."/>
            <person name="Chen F."/>
            <person name="Lapidus A."/>
            <person name="Ferriera S."/>
            <person name="Johnson J."/>
            <person name="Steglich C."/>
            <person name="Church G.M."/>
            <person name="Richardson P."/>
            <person name="Chisholm S.W."/>
        </authorList>
    </citation>
    <scope>NUCLEOTIDE SEQUENCE [LARGE SCALE GENOMIC DNA]</scope>
    <source>
        <strain>MIT 9211</strain>
    </source>
</reference>
<sequence>MGSSFGDLFRISTFGESHGGGVGVILEGCPPRLAIDVDAIQAELDRRRPGQSKITTPRNEVDQVEILSGLVDNKTLGTPISMVVRNKDFRPNDYGEMQNIFRPSHADGTYHLKYGVQAASGGGRASARETIGRVAAGAIAKQLLRKVNQTEVLAWVKRIHTIEADVDPNSVQIKDIESNIVRCPDPKIAKLMVERIEEVSRDGDSCGGVIECIVRNPPAGLGMPVFDKLEADLAKALMSLPASKGFEIGSGFSGTFLKGSEHNDAFIPSGKGILRTATNNSGGIQGGISNGELIVLRVAFKPTATIRKDQKTVDSDGKERTLSAKGRHDPCVLPRAVPMVESMVALVLADHLLRQQGQCGLWQ</sequence>
<keyword id="KW-0028">Amino-acid biosynthesis</keyword>
<keyword id="KW-0057">Aromatic amino acid biosynthesis</keyword>
<keyword id="KW-0274">FAD</keyword>
<keyword id="KW-0285">Flavoprotein</keyword>
<keyword id="KW-0288">FMN</keyword>
<keyword id="KW-0456">Lyase</keyword>
<keyword id="KW-0521">NADP</keyword>
<keyword id="KW-1185">Reference proteome</keyword>
<evidence type="ECO:0000255" key="1">
    <source>
        <dbReference type="HAMAP-Rule" id="MF_00300"/>
    </source>
</evidence>
<dbReference type="EC" id="4.2.3.5" evidence="1"/>
<dbReference type="EMBL" id="CP000878">
    <property type="protein sequence ID" value="ABX08178.1"/>
    <property type="molecule type" value="Genomic_DNA"/>
</dbReference>
<dbReference type="RefSeq" id="WP_012194803.1">
    <property type="nucleotide sequence ID" value="NC_009976.1"/>
</dbReference>
<dbReference type="SMR" id="A9BDJ2"/>
<dbReference type="STRING" id="93059.P9211_02471"/>
<dbReference type="KEGG" id="pmj:P9211_02471"/>
<dbReference type="eggNOG" id="COG0082">
    <property type="taxonomic scope" value="Bacteria"/>
</dbReference>
<dbReference type="HOGENOM" id="CLU_034547_0_1_3"/>
<dbReference type="OrthoDB" id="9771806at2"/>
<dbReference type="UniPathway" id="UPA00053">
    <property type="reaction ID" value="UER00090"/>
</dbReference>
<dbReference type="Proteomes" id="UP000000788">
    <property type="component" value="Chromosome"/>
</dbReference>
<dbReference type="GO" id="GO:0005829">
    <property type="term" value="C:cytosol"/>
    <property type="evidence" value="ECO:0007669"/>
    <property type="project" value="TreeGrafter"/>
</dbReference>
<dbReference type="GO" id="GO:0004107">
    <property type="term" value="F:chorismate synthase activity"/>
    <property type="evidence" value="ECO:0007669"/>
    <property type="project" value="UniProtKB-UniRule"/>
</dbReference>
<dbReference type="GO" id="GO:0010181">
    <property type="term" value="F:FMN binding"/>
    <property type="evidence" value="ECO:0007669"/>
    <property type="project" value="TreeGrafter"/>
</dbReference>
<dbReference type="GO" id="GO:0008652">
    <property type="term" value="P:amino acid biosynthetic process"/>
    <property type="evidence" value="ECO:0007669"/>
    <property type="project" value="UniProtKB-KW"/>
</dbReference>
<dbReference type="GO" id="GO:0009073">
    <property type="term" value="P:aromatic amino acid family biosynthetic process"/>
    <property type="evidence" value="ECO:0007669"/>
    <property type="project" value="UniProtKB-KW"/>
</dbReference>
<dbReference type="GO" id="GO:0009423">
    <property type="term" value="P:chorismate biosynthetic process"/>
    <property type="evidence" value="ECO:0007669"/>
    <property type="project" value="UniProtKB-UniRule"/>
</dbReference>
<dbReference type="CDD" id="cd07304">
    <property type="entry name" value="Chorismate_synthase"/>
    <property type="match status" value="1"/>
</dbReference>
<dbReference type="FunFam" id="3.60.150.10:FF:000003">
    <property type="entry name" value="Chorismate synthase"/>
    <property type="match status" value="1"/>
</dbReference>
<dbReference type="Gene3D" id="3.60.150.10">
    <property type="entry name" value="Chorismate synthase AroC"/>
    <property type="match status" value="1"/>
</dbReference>
<dbReference type="HAMAP" id="MF_00300">
    <property type="entry name" value="Chorismate_synth"/>
    <property type="match status" value="1"/>
</dbReference>
<dbReference type="InterPro" id="IPR000453">
    <property type="entry name" value="Chorismate_synth"/>
</dbReference>
<dbReference type="InterPro" id="IPR035904">
    <property type="entry name" value="Chorismate_synth_AroC_sf"/>
</dbReference>
<dbReference type="InterPro" id="IPR020541">
    <property type="entry name" value="Chorismate_synthase_CS"/>
</dbReference>
<dbReference type="NCBIfam" id="TIGR00033">
    <property type="entry name" value="aroC"/>
    <property type="match status" value="1"/>
</dbReference>
<dbReference type="NCBIfam" id="NF003793">
    <property type="entry name" value="PRK05382.1"/>
    <property type="match status" value="1"/>
</dbReference>
<dbReference type="PANTHER" id="PTHR21085">
    <property type="entry name" value="CHORISMATE SYNTHASE"/>
    <property type="match status" value="1"/>
</dbReference>
<dbReference type="PANTHER" id="PTHR21085:SF0">
    <property type="entry name" value="CHORISMATE SYNTHASE"/>
    <property type="match status" value="1"/>
</dbReference>
<dbReference type="Pfam" id="PF01264">
    <property type="entry name" value="Chorismate_synt"/>
    <property type="match status" value="1"/>
</dbReference>
<dbReference type="PIRSF" id="PIRSF001456">
    <property type="entry name" value="Chorismate_synth"/>
    <property type="match status" value="1"/>
</dbReference>
<dbReference type="SUPFAM" id="SSF103263">
    <property type="entry name" value="Chorismate synthase, AroC"/>
    <property type="match status" value="1"/>
</dbReference>
<dbReference type="PROSITE" id="PS00787">
    <property type="entry name" value="CHORISMATE_SYNTHASE_1"/>
    <property type="match status" value="1"/>
</dbReference>
<dbReference type="PROSITE" id="PS00788">
    <property type="entry name" value="CHORISMATE_SYNTHASE_2"/>
    <property type="match status" value="1"/>
</dbReference>
<dbReference type="PROSITE" id="PS00789">
    <property type="entry name" value="CHORISMATE_SYNTHASE_3"/>
    <property type="match status" value="1"/>
</dbReference>
<gene>
    <name evidence="1" type="primary">aroC</name>
    <name type="ordered locus">P9211_02471</name>
</gene>
<accession>A9BDJ2</accession>
<comment type="function">
    <text evidence="1">Catalyzes the anti-1,4-elimination of the C-3 phosphate and the C-6 proR hydrogen from 5-enolpyruvylshikimate-3-phosphate (EPSP) to yield chorismate, which is the branch point compound that serves as the starting substrate for the three terminal pathways of aromatic amino acid biosynthesis. This reaction introduces a second double bond into the aromatic ring system.</text>
</comment>
<comment type="catalytic activity">
    <reaction evidence="1">
        <text>5-O-(1-carboxyvinyl)-3-phosphoshikimate = chorismate + phosphate</text>
        <dbReference type="Rhea" id="RHEA:21020"/>
        <dbReference type="ChEBI" id="CHEBI:29748"/>
        <dbReference type="ChEBI" id="CHEBI:43474"/>
        <dbReference type="ChEBI" id="CHEBI:57701"/>
        <dbReference type="EC" id="4.2.3.5"/>
    </reaction>
</comment>
<comment type="cofactor">
    <cofactor evidence="1">
        <name>FMNH2</name>
        <dbReference type="ChEBI" id="CHEBI:57618"/>
    </cofactor>
    <text evidence="1">Reduced FMN (FMNH(2)).</text>
</comment>
<comment type="pathway">
    <text evidence="1">Metabolic intermediate biosynthesis; chorismate biosynthesis; chorismate from D-erythrose 4-phosphate and phosphoenolpyruvate: step 7/7.</text>
</comment>
<comment type="subunit">
    <text evidence="1">Homotetramer.</text>
</comment>
<comment type="similarity">
    <text evidence="1">Belongs to the chorismate synthase family.</text>
</comment>
<name>AROC_PROM4</name>
<feature type="chain" id="PRO_1000115383" description="Chorismate synthase">
    <location>
        <begin position="1"/>
        <end position="363"/>
    </location>
</feature>
<feature type="binding site" evidence="1">
    <location>
        <position position="47"/>
    </location>
    <ligand>
        <name>NADP(+)</name>
        <dbReference type="ChEBI" id="CHEBI:58349"/>
    </ligand>
</feature>
<feature type="binding site" evidence="1">
    <location>
        <begin position="124"/>
        <end position="126"/>
    </location>
    <ligand>
        <name>FMN</name>
        <dbReference type="ChEBI" id="CHEBI:58210"/>
    </ligand>
</feature>
<feature type="binding site" evidence="1">
    <location>
        <position position="286"/>
    </location>
    <ligand>
        <name>FMN</name>
        <dbReference type="ChEBI" id="CHEBI:58210"/>
    </ligand>
</feature>
<feature type="binding site" evidence="1">
    <location>
        <begin position="301"/>
        <end position="305"/>
    </location>
    <ligand>
        <name>FMN</name>
        <dbReference type="ChEBI" id="CHEBI:58210"/>
    </ligand>
</feature>
<feature type="binding site" evidence="1">
    <location>
        <position position="327"/>
    </location>
    <ligand>
        <name>FMN</name>
        <dbReference type="ChEBI" id="CHEBI:58210"/>
    </ligand>
</feature>
<protein>
    <recommendedName>
        <fullName evidence="1">Chorismate synthase</fullName>
        <shortName evidence="1">CS</shortName>
        <ecNumber evidence="1">4.2.3.5</ecNumber>
    </recommendedName>
    <alternativeName>
        <fullName evidence="1">5-enolpyruvylshikimate-3-phosphate phospholyase</fullName>
    </alternativeName>
</protein>
<organism>
    <name type="scientific">Prochlorococcus marinus (strain MIT 9211)</name>
    <dbReference type="NCBI Taxonomy" id="93059"/>
    <lineage>
        <taxon>Bacteria</taxon>
        <taxon>Bacillati</taxon>
        <taxon>Cyanobacteriota</taxon>
        <taxon>Cyanophyceae</taxon>
        <taxon>Synechococcales</taxon>
        <taxon>Prochlorococcaceae</taxon>
        <taxon>Prochlorococcus</taxon>
    </lineage>
</organism>